<organism>
    <name type="scientific">Xylella fastidiosa (strain Temecula1 / ATCC 700964)</name>
    <dbReference type="NCBI Taxonomy" id="183190"/>
    <lineage>
        <taxon>Bacteria</taxon>
        <taxon>Pseudomonadati</taxon>
        <taxon>Pseudomonadota</taxon>
        <taxon>Gammaproteobacteria</taxon>
        <taxon>Lysobacterales</taxon>
        <taxon>Lysobacteraceae</taxon>
        <taxon>Xylella</taxon>
    </lineage>
</organism>
<sequence>MSDITVANYHAFPDARGHFGRYGGRFVAETLIGPLQELAQAYDAARHDPDFIAAYNKDLKDYVGRPSPIYHAERLSRKVGGAQILLKREDLNHTGAHKINNTIGQALLAARMGKTRIIAETGAGQHGVASATVAARLGLECVVYMGATDIQRQQINVYRMKLLGATVVPVTSGSATLKDALNEAMRDWVTHVGHTFYIIGTVAGPDPYPRMVRDFNAIVGREARAQMIEDYGRLPDAMTACVGGGSNAIGLFHAFLNDASVRIYGAEAAGDGIATGRHAASIVAGRPGVLHGNRTYVVCDDDGQILETHSVSAGLDYPGVGPEHAFLADSGRVQYVGIRDEEALAAFHLLAHTEGILAALESSHAVAHTMTLARDLPKDALVLCNLSGRGDKDVHTIAAREGVRV</sequence>
<accession>Q87DR9</accession>
<keyword id="KW-0028">Amino-acid biosynthesis</keyword>
<keyword id="KW-0057">Aromatic amino acid biosynthesis</keyword>
<keyword id="KW-0456">Lyase</keyword>
<keyword id="KW-0663">Pyridoxal phosphate</keyword>
<keyword id="KW-1185">Reference proteome</keyword>
<keyword id="KW-0822">Tryptophan biosynthesis</keyword>
<name>TRPB_XYLFT</name>
<reference key="1">
    <citation type="journal article" date="2003" name="J. Bacteriol.">
        <title>Comparative analyses of the complete genome sequences of Pierce's disease and citrus variegated chlorosis strains of Xylella fastidiosa.</title>
        <authorList>
            <person name="Van Sluys M.A."/>
            <person name="de Oliveira M.C."/>
            <person name="Monteiro-Vitorello C.B."/>
            <person name="Miyaki C.Y."/>
            <person name="Furlan L.R."/>
            <person name="Camargo L.E.A."/>
            <person name="da Silva A.C.R."/>
            <person name="Moon D.H."/>
            <person name="Takita M.A."/>
            <person name="Lemos E.G.M."/>
            <person name="Machado M.A."/>
            <person name="Ferro M.I.T."/>
            <person name="da Silva F.R."/>
            <person name="Goldman M.H.S."/>
            <person name="Goldman G.H."/>
            <person name="Lemos M.V.F."/>
            <person name="El-Dorry H."/>
            <person name="Tsai S.M."/>
            <person name="Carrer H."/>
            <person name="Carraro D.M."/>
            <person name="de Oliveira R.C."/>
            <person name="Nunes L.R."/>
            <person name="Siqueira W.J."/>
            <person name="Coutinho L.L."/>
            <person name="Kimura E.T."/>
            <person name="Ferro E.S."/>
            <person name="Harakava R."/>
            <person name="Kuramae E.E."/>
            <person name="Marino C.L."/>
            <person name="Giglioti E."/>
            <person name="Abreu I.L."/>
            <person name="Alves L.M.C."/>
            <person name="do Amaral A.M."/>
            <person name="Baia G.S."/>
            <person name="Blanco S.R."/>
            <person name="Brito M.S."/>
            <person name="Cannavan F.S."/>
            <person name="Celestino A.V."/>
            <person name="da Cunha A.F."/>
            <person name="Fenille R.C."/>
            <person name="Ferro J.A."/>
            <person name="Formighieri E.F."/>
            <person name="Kishi L.T."/>
            <person name="Leoni S.G."/>
            <person name="Oliveira A.R."/>
            <person name="Rosa V.E. Jr."/>
            <person name="Sassaki F.T."/>
            <person name="Sena J.A.D."/>
            <person name="de Souza A.A."/>
            <person name="Truffi D."/>
            <person name="Tsukumo F."/>
            <person name="Yanai G.M."/>
            <person name="Zaros L.G."/>
            <person name="Civerolo E.L."/>
            <person name="Simpson A.J.G."/>
            <person name="Almeida N.F. Jr."/>
            <person name="Setubal J.C."/>
            <person name="Kitajima J.P."/>
        </authorList>
    </citation>
    <scope>NUCLEOTIDE SEQUENCE [LARGE SCALE GENOMIC DNA]</scope>
    <source>
        <strain>Temecula1 / ATCC 700964</strain>
    </source>
</reference>
<comment type="function">
    <text evidence="1">The beta subunit is responsible for the synthesis of L-tryptophan from indole and L-serine.</text>
</comment>
<comment type="catalytic activity">
    <reaction evidence="1">
        <text>(1S,2R)-1-C-(indol-3-yl)glycerol 3-phosphate + L-serine = D-glyceraldehyde 3-phosphate + L-tryptophan + H2O</text>
        <dbReference type="Rhea" id="RHEA:10532"/>
        <dbReference type="ChEBI" id="CHEBI:15377"/>
        <dbReference type="ChEBI" id="CHEBI:33384"/>
        <dbReference type="ChEBI" id="CHEBI:57912"/>
        <dbReference type="ChEBI" id="CHEBI:58866"/>
        <dbReference type="ChEBI" id="CHEBI:59776"/>
        <dbReference type="EC" id="4.2.1.20"/>
    </reaction>
</comment>
<comment type="cofactor">
    <cofactor evidence="1">
        <name>pyridoxal 5'-phosphate</name>
        <dbReference type="ChEBI" id="CHEBI:597326"/>
    </cofactor>
</comment>
<comment type="pathway">
    <text evidence="1">Amino-acid biosynthesis; L-tryptophan biosynthesis; L-tryptophan from chorismate: step 5/5.</text>
</comment>
<comment type="subunit">
    <text evidence="1">Tetramer of two alpha and two beta chains.</text>
</comment>
<comment type="similarity">
    <text evidence="1">Belongs to the TrpB family.</text>
</comment>
<protein>
    <recommendedName>
        <fullName evidence="1">Tryptophan synthase beta chain</fullName>
        <ecNumber evidence="1">4.2.1.20</ecNumber>
    </recommendedName>
</protein>
<feature type="chain" id="PRO_0000099028" description="Tryptophan synthase beta chain">
    <location>
        <begin position="1"/>
        <end position="405"/>
    </location>
</feature>
<feature type="modified residue" description="N6-(pyridoxal phosphate)lysine" evidence="1">
    <location>
        <position position="98"/>
    </location>
</feature>
<evidence type="ECO:0000255" key="1">
    <source>
        <dbReference type="HAMAP-Rule" id="MF_00133"/>
    </source>
</evidence>
<proteinExistence type="inferred from homology"/>
<dbReference type="EC" id="4.2.1.20" evidence="1"/>
<dbReference type="EMBL" id="AE009442">
    <property type="protein sequence ID" value="AAO28484.1"/>
    <property type="molecule type" value="Genomic_DNA"/>
</dbReference>
<dbReference type="RefSeq" id="WP_011097720.1">
    <property type="nucleotide sequence ID" value="NC_004556.1"/>
</dbReference>
<dbReference type="SMR" id="Q87DR9"/>
<dbReference type="GeneID" id="93904330"/>
<dbReference type="KEGG" id="xft:PD_0612"/>
<dbReference type="HOGENOM" id="CLU_016734_3_1_6"/>
<dbReference type="UniPathway" id="UPA00035">
    <property type="reaction ID" value="UER00044"/>
</dbReference>
<dbReference type="Proteomes" id="UP000002516">
    <property type="component" value="Chromosome"/>
</dbReference>
<dbReference type="GO" id="GO:0005737">
    <property type="term" value="C:cytoplasm"/>
    <property type="evidence" value="ECO:0007669"/>
    <property type="project" value="TreeGrafter"/>
</dbReference>
<dbReference type="GO" id="GO:0004834">
    <property type="term" value="F:tryptophan synthase activity"/>
    <property type="evidence" value="ECO:0007669"/>
    <property type="project" value="UniProtKB-UniRule"/>
</dbReference>
<dbReference type="CDD" id="cd06446">
    <property type="entry name" value="Trp-synth_B"/>
    <property type="match status" value="1"/>
</dbReference>
<dbReference type="FunFam" id="3.40.50.1100:FF:000001">
    <property type="entry name" value="Tryptophan synthase beta chain"/>
    <property type="match status" value="1"/>
</dbReference>
<dbReference type="FunFam" id="3.40.50.1100:FF:000004">
    <property type="entry name" value="Tryptophan synthase beta chain"/>
    <property type="match status" value="1"/>
</dbReference>
<dbReference type="Gene3D" id="3.40.50.1100">
    <property type="match status" value="2"/>
</dbReference>
<dbReference type="HAMAP" id="MF_00133">
    <property type="entry name" value="Trp_synth_beta"/>
    <property type="match status" value="1"/>
</dbReference>
<dbReference type="InterPro" id="IPR006653">
    <property type="entry name" value="Trp_synth_b_CS"/>
</dbReference>
<dbReference type="InterPro" id="IPR006654">
    <property type="entry name" value="Trp_synth_beta"/>
</dbReference>
<dbReference type="InterPro" id="IPR023026">
    <property type="entry name" value="Trp_synth_beta/beta-like"/>
</dbReference>
<dbReference type="InterPro" id="IPR001926">
    <property type="entry name" value="TrpB-like_PALP"/>
</dbReference>
<dbReference type="InterPro" id="IPR036052">
    <property type="entry name" value="TrpB-like_PALP_sf"/>
</dbReference>
<dbReference type="NCBIfam" id="TIGR00263">
    <property type="entry name" value="trpB"/>
    <property type="match status" value="1"/>
</dbReference>
<dbReference type="PANTHER" id="PTHR48077:SF3">
    <property type="entry name" value="TRYPTOPHAN SYNTHASE"/>
    <property type="match status" value="1"/>
</dbReference>
<dbReference type="PANTHER" id="PTHR48077">
    <property type="entry name" value="TRYPTOPHAN SYNTHASE-RELATED"/>
    <property type="match status" value="1"/>
</dbReference>
<dbReference type="Pfam" id="PF00291">
    <property type="entry name" value="PALP"/>
    <property type="match status" value="1"/>
</dbReference>
<dbReference type="PIRSF" id="PIRSF001413">
    <property type="entry name" value="Trp_syn_beta"/>
    <property type="match status" value="1"/>
</dbReference>
<dbReference type="SUPFAM" id="SSF53686">
    <property type="entry name" value="Tryptophan synthase beta subunit-like PLP-dependent enzymes"/>
    <property type="match status" value="1"/>
</dbReference>
<dbReference type="PROSITE" id="PS00168">
    <property type="entry name" value="TRP_SYNTHASE_BETA"/>
    <property type="match status" value="1"/>
</dbReference>
<gene>
    <name evidence="1" type="primary">trpB</name>
    <name type="ordered locus">PD_0612</name>
</gene>